<organism>
    <name type="scientific">Escherichia coli (strain 55989 / EAEC)</name>
    <dbReference type="NCBI Taxonomy" id="585055"/>
    <lineage>
        <taxon>Bacteria</taxon>
        <taxon>Pseudomonadati</taxon>
        <taxon>Pseudomonadota</taxon>
        <taxon>Gammaproteobacteria</taxon>
        <taxon>Enterobacterales</taxon>
        <taxon>Enterobacteriaceae</taxon>
        <taxon>Escherichia</taxon>
    </lineage>
</organism>
<feature type="chain" id="PRO_1000197831" description="UPF0178 protein YaiI">
    <location>
        <begin position="1"/>
        <end position="152"/>
    </location>
</feature>
<keyword id="KW-1185">Reference proteome</keyword>
<name>YAII_ECO55</name>
<dbReference type="EMBL" id="CU928145">
    <property type="protein sequence ID" value="CAU96270.1"/>
    <property type="molecule type" value="Genomic_DNA"/>
</dbReference>
<dbReference type="RefSeq" id="WP_000158159.1">
    <property type="nucleotide sequence ID" value="NZ_CP028304.1"/>
</dbReference>
<dbReference type="KEGG" id="eck:EC55989_0396"/>
<dbReference type="HOGENOM" id="CLU_106619_2_1_6"/>
<dbReference type="Proteomes" id="UP000000746">
    <property type="component" value="Chromosome"/>
</dbReference>
<dbReference type="CDD" id="cd18720">
    <property type="entry name" value="PIN_YqxD-like"/>
    <property type="match status" value="1"/>
</dbReference>
<dbReference type="HAMAP" id="MF_00489">
    <property type="entry name" value="UPF0178"/>
    <property type="match status" value="1"/>
</dbReference>
<dbReference type="InterPro" id="IPR003791">
    <property type="entry name" value="UPF0178"/>
</dbReference>
<dbReference type="NCBIfam" id="NF001095">
    <property type="entry name" value="PRK00124.1"/>
    <property type="match status" value="1"/>
</dbReference>
<dbReference type="PANTHER" id="PTHR35146">
    <property type="entry name" value="UPF0178 PROTEIN YAII"/>
    <property type="match status" value="1"/>
</dbReference>
<dbReference type="PANTHER" id="PTHR35146:SF1">
    <property type="entry name" value="UPF0178 PROTEIN YAII"/>
    <property type="match status" value="1"/>
</dbReference>
<dbReference type="Pfam" id="PF02639">
    <property type="entry name" value="DUF188"/>
    <property type="match status" value="1"/>
</dbReference>
<evidence type="ECO:0000255" key="1">
    <source>
        <dbReference type="HAMAP-Rule" id="MF_00489"/>
    </source>
</evidence>
<gene>
    <name evidence="1" type="primary">yaiI</name>
    <name type="ordered locus">EC55989_0396</name>
</gene>
<reference key="1">
    <citation type="journal article" date="2009" name="PLoS Genet.">
        <title>Organised genome dynamics in the Escherichia coli species results in highly diverse adaptive paths.</title>
        <authorList>
            <person name="Touchon M."/>
            <person name="Hoede C."/>
            <person name="Tenaillon O."/>
            <person name="Barbe V."/>
            <person name="Baeriswyl S."/>
            <person name="Bidet P."/>
            <person name="Bingen E."/>
            <person name="Bonacorsi S."/>
            <person name="Bouchier C."/>
            <person name="Bouvet O."/>
            <person name="Calteau A."/>
            <person name="Chiapello H."/>
            <person name="Clermont O."/>
            <person name="Cruveiller S."/>
            <person name="Danchin A."/>
            <person name="Diard M."/>
            <person name="Dossat C."/>
            <person name="Karoui M.E."/>
            <person name="Frapy E."/>
            <person name="Garry L."/>
            <person name="Ghigo J.M."/>
            <person name="Gilles A.M."/>
            <person name="Johnson J."/>
            <person name="Le Bouguenec C."/>
            <person name="Lescat M."/>
            <person name="Mangenot S."/>
            <person name="Martinez-Jehanne V."/>
            <person name="Matic I."/>
            <person name="Nassif X."/>
            <person name="Oztas S."/>
            <person name="Petit M.A."/>
            <person name="Pichon C."/>
            <person name="Rouy Z."/>
            <person name="Ruf C.S."/>
            <person name="Schneider D."/>
            <person name="Tourret J."/>
            <person name="Vacherie B."/>
            <person name="Vallenet D."/>
            <person name="Medigue C."/>
            <person name="Rocha E.P.C."/>
            <person name="Denamur E."/>
        </authorList>
    </citation>
    <scope>NUCLEOTIDE SEQUENCE [LARGE SCALE GENOMIC DNA]</scope>
    <source>
        <strain>55989 / EAEC</strain>
    </source>
</reference>
<protein>
    <recommendedName>
        <fullName evidence="1">UPF0178 protein YaiI</fullName>
    </recommendedName>
</protein>
<comment type="similarity">
    <text evidence="1">Belongs to the UPF0178 family.</text>
</comment>
<accession>B7L542</accession>
<sequence>MTIWVDADACPNVIKEILYRAAERMQMPLVLVANQSLRVPPSRFIRTLRVAAGFDVADNEIVRQCEAGDLVITADIPLAAEAIEKGAAALNPRGERYTPATIRERLTMRDFMDTLRASGIQTGGPDSLSQRDRQAFAAELEKWWLEVQRSRG</sequence>
<proteinExistence type="inferred from homology"/>